<proteinExistence type="inferred from homology"/>
<reference key="1">
    <citation type="journal article" date="1994" name="J. Mol. Evol.">
        <title>Phylogeny of the Drosophila obscura species group deduced from mitochondrial DNA sequences.</title>
        <authorList>
            <person name="Barrio E."/>
            <person name="Latorre A."/>
            <person name="Moya A."/>
        </authorList>
    </citation>
    <scope>NUCLEOTIDE SEQUENCE [GENOMIC DNA]</scope>
</reference>
<comment type="function">
    <text evidence="1">Core subunit of the mitochondrial membrane respiratory chain NADH dehydrogenase (Complex I) that is believed to belong to the minimal assembly required for catalysis. Complex I functions in the transfer of electrons from NADH to the respiratory chain. The immediate electron acceptor for the enzyme is believed to be ubiquinone (By similarity).</text>
</comment>
<comment type="catalytic activity">
    <reaction>
        <text>a ubiquinone + NADH + 5 H(+)(in) = a ubiquinol + NAD(+) + 4 H(+)(out)</text>
        <dbReference type="Rhea" id="RHEA:29091"/>
        <dbReference type="Rhea" id="RHEA-COMP:9565"/>
        <dbReference type="Rhea" id="RHEA-COMP:9566"/>
        <dbReference type="ChEBI" id="CHEBI:15378"/>
        <dbReference type="ChEBI" id="CHEBI:16389"/>
        <dbReference type="ChEBI" id="CHEBI:17976"/>
        <dbReference type="ChEBI" id="CHEBI:57540"/>
        <dbReference type="ChEBI" id="CHEBI:57945"/>
        <dbReference type="EC" id="7.1.1.2"/>
    </reaction>
</comment>
<comment type="subcellular location">
    <subcellularLocation>
        <location evidence="1">Mitochondrion inner membrane</location>
        <topology evidence="1">Multi-pass membrane protein</topology>
    </subcellularLocation>
</comment>
<comment type="similarity">
    <text evidence="3">Belongs to the complex I subunit 1 family.</text>
</comment>
<sequence length="163" mass="18224">MEFILSLVGSLLLVICVLVSVAFLTLLERKVLGYIQIRKGPNKVGLMGIPQPFCDAIKLFTKEQTYPLLSNYLSYYISPIFSLFLSLFVWMCMPFFVKLYSFNLGGLFFLCCTSLGVYTVMVAGWSSNSNYALLGGLRAVAQTISYEVSLALIGFKILLFSFL</sequence>
<keyword id="KW-0249">Electron transport</keyword>
<keyword id="KW-0472">Membrane</keyword>
<keyword id="KW-0496">Mitochondrion</keyword>
<keyword id="KW-0999">Mitochondrion inner membrane</keyword>
<keyword id="KW-0520">NAD</keyword>
<keyword id="KW-0679">Respiratory chain</keyword>
<keyword id="KW-1278">Translocase</keyword>
<keyword id="KW-0812">Transmembrane</keyword>
<keyword id="KW-1133">Transmembrane helix</keyword>
<keyword id="KW-0813">Transport</keyword>
<keyword id="KW-0830">Ubiquinone</keyword>
<gene>
    <name type="primary">mt:ND1</name>
    <name type="synonym">ND1</name>
</gene>
<feature type="chain" id="PRO_0000117387" description="NADH-ubiquinone oxidoreductase chain 1">
    <location>
        <begin position="1"/>
        <end position="163"/>
    </location>
</feature>
<feature type="transmembrane region" description="Helical" evidence="2">
    <location>
        <begin position="3"/>
        <end position="23"/>
    </location>
</feature>
<feature type="transmembrane region" description="Helical" evidence="2">
    <location>
        <begin position="77"/>
        <end position="97"/>
    </location>
</feature>
<feature type="transmembrane region" description="Helical" evidence="2">
    <location>
        <begin position="104"/>
        <end position="124"/>
    </location>
</feature>
<feature type="transmembrane region" description="Helical" evidence="2">
    <location>
        <begin position="143"/>
        <end position="163"/>
    </location>
</feature>
<feature type="non-consecutive residues" evidence="3">
    <location>
        <begin position="152"/>
        <end position="153"/>
    </location>
</feature>
<name>NU1M_DROAM</name>
<protein>
    <recommendedName>
        <fullName>NADH-ubiquinone oxidoreductase chain 1</fullName>
        <ecNumber>7.1.1.2</ecNumber>
    </recommendedName>
    <alternativeName>
        <fullName>NADH dehydrogenase subunit 1</fullName>
    </alternativeName>
</protein>
<evidence type="ECO:0000250" key="1"/>
<evidence type="ECO:0000255" key="2"/>
<evidence type="ECO:0000305" key="3"/>
<accession>P84303</accession>
<accession>P51928</accession>
<accession>P51934</accession>
<accession>P51939</accession>
<accession>Q34285</accession>
<accession>Q34356</accession>
<accession>Q34396</accession>
<organism>
    <name type="scientific">Drosophila ambigua</name>
    <name type="common">Fruit fly</name>
    <dbReference type="NCBI Taxonomy" id="7216"/>
    <lineage>
        <taxon>Eukaryota</taxon>
        <taxon>Metazoa</taxon>
        <taxon>Ecdysozoa</taxon>
        <taxon>Arthropoda</taxon>
        <taxon>Hexapoda</taxon>
        <taxon>Insecta</taxon>
        <taxon>Pterygota</taxon>
        <taxon>Neoptera</taxon>
        <taxon>Endopterygota</taxon>
        <taxon>Diptera</taxon>
        <taxon>Brachycera</taxon>
        <taxon>Muscomorpha</taxon>
        <taxon>Ephydroidea</taxon>
        <taxon>Drosophilidae</taxon>
        <taxon>Drosophila</taxon>
        <taxon>Sophophora</taxon>
    </lineage>
</organism>
<dbReference type="EC" id="7.1.1.2"/>
<dbReference type="EMBL" id="U07297">
    <property type="protein sequence ID" value="AAA76628.1"/>
    <property type="molecule type" value="Genomic_DNA"/>
</dbReference>
<dbReference type="EMBL" id="U07298">
    <property type="protein sequence ID" value="AAA76629.1"/>
    <property type="molecule type" value="Genomic_DNA"/>
</dbReference>
<dbReference type="SMR" id="P84303"/>
<dbReference type="GO" id="GO:0005743">
    <property type="term" value="C:mitochondrial inner membrane"/>
    <property type="evidence" value="ECO:0007669"/>
    <property type="project" value="UniProtKB-SubCell"/>
</dbReference>
<dbReference type="GO" id="GO:0008137">
    <property type="term" value="F:NADH dehydrogenase (ubiquinone) activity"/>
    <property type="evidence" value="ECO:0007669"/>
    <property type="project" value="UniProtKB-EC"/>
</dbReference>
<dbReference type="GO" id="GO:0009060">
    <property type="term" value="P:aerobic respiration"/>
    <property type="evidence" value="ECO:0007669"/>
    <property type="project" value="TreeGrafter"/>
</dbReference>
<dbReference type="InterPro" id="IPR001694">
    <property type="entry name" value="NADH_UbQ_OxRdtase_su1/FPO"/>
</dbReference>
<dbReference type="InterPro" id="IPR018086">
    <property type="entry name" value="NADH_UbQ_OxRdtase_su1_CS"/>
</dbReference>
<dbReference type="PANTHER" id="PTHR11432">
    <property type="entry name" value="NADH DEHYDROGENASE SUBUNIT 1"/>
    <property type="match status" value="1"/>
</dbReference>
<dbReference type="PANTHER" id="PTHR11432:SF3">
    <property type="entry name" value="NADH-UBIQUINONE OXIDOREDUCTASE CHAIN 1"/>
    <property type="match status" value="1"/>
</dbReference>
<dbReference type="Pfam" id="PF00146">
    <property type="entry name" value="NADHdh"/>
    <property type="match status" value="1"/>
</dbReference>
<dbReference type="PROSITE" id="PS00667">
    <property type="entry name" value="COMPLEX1_ND1_1"/>
    <property type="match status" value="1"/>
</dbReference>
<geneLocation type="mitochondrion"/>